<dbReference type="EMBL" id="U31552">
    <property type="protein sequence ID" value="AAB00688.1"/>
    <property type="molecule type" value="mRNA"/>
</dbReference>
<dbReference type="PIR" id="I51691">
    <property type="entry name" value="I51691"/>
</dbReference>
<dbReference type="RefSeq" id="NP_001084096.1">
    <property type="nucleotide sequence ID" value="NM_001090627.1"/>
</dbReference>
<dbReference type="PDB" id="1L6O">
    <property type="method" value="X-ray"/>
    <property type="resolution" value="2.20 A"/>
    <property type="chains" value="A/B/C=252-340"/>
</dbReference>
<dbReference type="PDB" id="2F0A">
    <property type="method" value="X-ray"/>
    <property type="resolution" value="1.80 A"/>
    <property type="chains" value="A/B/C/D=252-340"/>
</dbReference>
<dbReference type="PDB" id="3FY5">
    <property type="method" value="X-ray"/>
    <property type="resolution" value="2.40 A"/>
    <property type="chains" value="A/B=254-343"/>
</dbReference>
<dbReference type="PDBsum" id="1L6O"/>
<dbReference type="PDBsum" id="2F0A"/>
<dbReference type="PDBsum" id="3FY5"/>
<dbReference type="SMR" id="P51142"/>
<dbReference type="BioGRID" id="100626">
    <property type="interactions" value="3"/>
</dbReference>
<dbReference type="ELM" id="P51142"/>
<dbReference type="IntAct" id="P51142">
    <property type="interactions" value="7"/>
</dbReference>
<dbReference type="MINT" id="P51142"/>
<dbReference type="DNASU" id="399301"/>
<dbReference type="GeneID" id="399301"/>
<dbReference type="KEGG" id="xla:399301"/>
<dbReference type="AGR" id="Xenbase:XB-GENE-1017467"/>
<dbReference type="CTD" id="399301"/>
<dbReference type="Xenbase" id="XB-GENE-1017467">
    <property type="gene designation" value="dvl2.L"/>
</dbReference>
<dbReference type="OrthoDB" id="10031689at2759"/>
<dbReference type="EvolutionaryTrace" id="P51142"/>
<dbReference type="Proteomes" id="UP000186698">
    <property type="component" value="Chromosome 3L"/>
</dbReference>
<dbReference type="Bgee" id="399301">
    <property type="expression patterns" value="Expressed in egg cell and 19 other cell types or tissues"/>
</dbReference>
<dbReference type="GO" id="GO:0005938">
    <property type="term" value="C:cell cortex"/>
    <property type="evidence" value="ECO:0000314"/>
    <property type="project" value="MGI"/>
</dbReference>
<dbReference type="GO" id="GO:0009986">
    <property type="term" value="C:cell surface"/>
    <property type="evidence" value="ECO:0000314"/>
    <property type="project" value="UniProtKB"/>
</dbReference>
<dbReference type="GO" id="GO:0035253">
    <property type="term" value="C:ciliary rootlet"/>
    <property type="evidence" value="ECO:0000314"/>
    <property type="project" value="UniProtKB"/>
</dbReference>
<dbReference type="GO" id="GO:0005737">
    <property type="term" value="C:cytoplasm"/>
    <property type="evidence" value="ECO:0000314"/>
    <property type="project" value="UniProtKB"/>
</dbReference>
<dbReference type="GO" id="GO:0031410">
    <property type="term" value="C:cytoplasmic vesicle"/>
    <property type="evidence" value="ECO:0000314"/>
    <property type="project" value="UniProtKB"/>
</dbReference>
<dbReference type="GO" id="GO:0005829">
    <property type="term" value="C:cytosol"/>
    <property type="evidence" value="ECO:0000318"/>
    <property type="project" value="GO_Central"/>
</dbReference>
<dbReference type="GO" id="GO:0005634">
    <property type="term" value="C:nucleus"/>
    <property type="evidence" value="ECO:0000314"/>
    <property type="project" value="UniProtKB"/>
</dbReference>
<dbReference type="GO" id="GO:0005886">
    <property type="term" value="C:plasma membrane"/>
    <property type="evidence" value="ECO:0000314"/>
    <property type="project" value="UniProtKB"/>
</dbReference>
<dbReference type="GO" id="GO:0046875">
    <property type="term" value="F:ephrin receptor binding"/>
    <property type="evidence" value="ECO:0000314"/>
    <property type="project" value="UniProtKB"/>
</dbReference>
<dbReference type="GO" id="GO:0005109">
    <property type="term" value="F:frizzled binding"/>
    <property type="evidence" value="ECO:0000318"/>
    <property type="project" value="GO_Central"/>
</dbReference>
<dbReference type="GO" id="GO:0042802">
    <property type="term" value="F:identical protein binding"/>
    <property type="evidence" value="ECO:0000353"/>
    <property type="project" value="UniProtKB"/>
</dbReference>
<dbReference type="GO" id="GO:0045545">
    <property type="term" value="F:syndecan binding"/>
    <property type="evidence" value="ECO:0000353"/>
    <property type="project" value="UniProtKB"/>
</dbReference>
<dbReference type="GO" id="GO:0090630">
    <property type="term" value="P:activation of GTPase activity"/>
    <property type="evidence" value="ECO:0000315"/>
    <property type="project" value="UniProtKB"/>
</dbReference>
<dbReference type="GO" id="GO:0009948">
    <property type="term" value="P:anterior/posterior axis specification"/>
    <property type="evidence" value="ECO:0000315"/>
    <property type="project" value="UniProtKB"/>
</dbReference>
<dbReference type="GO" id="GO:0060070">
    <property type="term" value="P:canonical Wnt signaling pathway"/>
    <property type="evidence" value="ECO:0000316"/>
    <property type="project" value="UniProtKB"/>
</dbReference>
<dbReference type="GO" id="GO:0032053">
    <property type="term" value="P:ciliary basal body organization"/>
    <property type="evidence" value="ECO:0000315"/>
    <property type="project" value="UniProtKB"/>
</dbReference>
<dbReference type="GO" id="GO:0060271">
    <property type="term" value="P:cilium assembly"/>
    <property type="evidence" value="ECO:0000315"/>
    <property type="project" value="UniProtKB"/>
</dbReference>
<dbReference type="GO" id="GO:0060026">
    <property type="term" value="P:convergent extension"/>
    <property type="evidence" value="ECO:0000315"/>
    <property type="project" value="UniProtKB"/>
</dbReference>
<dbReference type="GO" id="GO:0060027">
    <property type="term" value="P:convergent extension involved in gastrulation"/>
    <property type="evidence" value="ECO:0000315"/>
    <property type="project" value="UniProtKB"/>
</dbReference>
<dbReference type="GO" id="GO:0009950">
    <property type="term" value="P:dorsal/ventral axis specification"/>
    <property type="evidence" value="ECO:0000315"/>
    <property type="project" value="UniProtKB"/>
</dbReference>
<dbReference type="GO" id="GO:0048619">
    <property type="term" value="P:embryonic hindgut morphogenesis"/>
    <property type="evidence" value="ECO:0000315"/>
    <property type="project" value="Xenbase"/>
</dbReference>
<dbReference type="GO" id="GO:0048013">
    <property type="term" value="P:ephrin receptor signaling pathway"/>
    <property type="evidence" value="ECO:0000314"/>
    <property type="project" value="UniProtKB"/>
</dbReference>
<dbReference type="GO" id="GO:0001736">
    <property type="term" value="P:establishment of planar polarity"/>
    <property type="evidence" value="ECO:0000315"/>
    <property type="project" value="UniProtKB"/>
</dbReference>
<dbReference type="GO" id="GO:0007163">
    <property type="term" value="P:establishment or maintenance of cell polarity"/>
    <property type="evidence" value="ECO:0000315"/>
    <property type="project" value="UniProtKB"/>
</dbReference>
<dbReference type="GO" id="GO:0007369">
    <property type="term" value="P:gastrulation"/>
    <property type="evidence" value="ECO:0000315"/>
    <property type="project" value="Xenbase"/>
</dbReference>
<dbReference type="GO" id="GO:0001702">
    <property type="term" value="P:gastrulation with mouth forming second"/>
    <property type="evidence" value="ECO:0000315"/>
    <property type="project" value="UniProtKB"/>
</dbReference>
<dbReference type="GO" id="GO:0035556">
    <property type="term" value="P:intracellular signal transduction"/>
    <property type="evidence" value="ECO:0007669"/>
    <property type="project" value="InterPro"/>
</dbReference>
<dbReference type="GO" id="GO:0001843">
    <property type="term" value="P:neural tube closure"/>
    <property type="evidence" value="ECO:0000315"/>
    <property type="project" value="UniProtKB"/>
</dbReference>
<dbReference type="GO" id="GO:0022008">
    <property type="term" value="P:neurogenesis"/>
    <property type="evidence" value="ECO:0000315"/>
    <property type="project" value="UniProtKB"/>
</dbReference>
<dbReference type="GO" id="GO:0045944">
    <property type="term" value="P:positive regulation of transcription by RNA polymerase II"/>
    <property type="evidence" value="ECO:0000316"/>
    <property type="project" value="BHF-UCL"/>
</dbReference>
<dbReference type="GO" id="GO:0050821">
    <property type="term" value="P:protein stabilization"/>
    <property type="evidence" value="ECO:0000315"/>
    <property type="project" value="UniProtKB"/>
</dbReference>
<dbReference type="CDD" id="cd04438">
    <property type="entry name" value="DEP_dishevelled"/>
    <property type="match status" value="1"/>
</dbReference>
<dbReference type="CDD" id="cd06717">
    <property type="entry name" value="PDZ_Dishevelled-like"/>
    <property type="match status" value="1"/>
</dbReference>
<dbReference type="FunFam" id="2.40.240.130:FF:000001">
    <property type="entry name" value="Segment polarity protein dishevelled homolog DVL-1"/>
    <property type="match status" value="1"/>
</dbReference>
<dbReference type="FunFam" id="2.30.42.10:FF:000014">
    <property type="entry name" value="Segment polarity protein dishevelled homolog DVL-3"/>
    <property type="match status" value="1"/>
</dbReference>
<dbReference type="FunFam" id="1.10.10.10:FF:000040">
    <property type="entry name" value="segment polarity protein dishevelled homolog DVL-3"/>
    <property type="match status" value="1"/>
</dbReference>
<dbReference type="Gene3D" id="2.30.42.10">
    <property type="match status" value="1"/>
</dbReference>
<dbReference type="Gene3D" id="2.40.240.130">
    <property type="match status" value="1"/>
</dbReference>
<dbReference type="Gene3D" id="1.10.10.10">
    <property type="entry name" value="Winged helix-like DNA-binding domain superfamily/Winged helix DNA-binding domain"/>
    <property type="match status" value="1"/>
</dbReference>
<dbReference type="InterPro" id="IPR000591">
    <property type="entry name" value="DEP_dom"/>
</dbReference>
<dbReference type="InterPro" id="IPR024580">
    <property type="entry name" value="Dishevelled_C-dom"/>
</dbReference>
<dbReference type="InterPro" id="IPR008339">
    <property type="entry name" value="Dishevelled_fam"/>
</dbReference>
<dbReference type="InterPro" id="IPR003351">
    <property type="entry name" value="Dishevelled_protein_dom"/>
</dbReference>
<dbReference type="InterPro" id="IPR001158">
    <property type="entry name" value="DIX"/>
</dbReference>
<dbReference type="InterPro" id="IPR038207">
    <property type="entry name" value="DIX_dom_sf"/>
</dbReference>
<dbReference type="InterPro" id="IPR015506">
    <property type="entry name" value="Dsh/Dvl-rel"/>
</dbReference>
<dbReference type="InterPro" id="IPR008341">
    <property type="entry name" value="DVL2"/>
</dbReference>
<dbReference type="InterPro" id="IPR001478">
    <property type="entry name" value="PDZ"/>
</dbReference>
<dbReference type="InterPro" id="IPR036034">
    <property type="entry name" value="PDZ_sf"/>
</dbReference>
<dbReference type="InterPro" id="IPR029071">
    <property type="entry name" value="Ubiquitin-like_domsf"/>
</dbReference>
<dbReference type="InterPro" id="IPR036388">
    <property type="entry name" value="WH-like_DNA-bd_sf"/>
</dbReference>
<dbReference type="InterPro" id="IPR036390">
    <property type="entry name" value="WH_DNA-bd_sf"/>
</dbReference>
<dbReference type="PANTHER" id="PTHR10878">
    <property type="entry name" value="SEGMENT POLARITY PROTEIN DISHEVELLED"/>
    <property type="match status" value="1"/>
</dbReference>
<dbReference type="PANTHER" id="PTHR10878:SF8">
    <property type="entry name" value="SEGMENT POLARITY PROTEIN DISHEVELLED HOMOLOG DVL-2"/>
    <property type="match status" value="1"/>
</dbReference>
<dbReference type="Pfam" id="PF00610">
    <property type="entry name" value="DEP"/>
    <property type="match status" value="1"/>
</dbReference>
<dbReference type="Pfam" id="PF02377">
    <property type="entry name" value="Dishevelled"/>
    <property type="match status" value="1"/>
</dbReference>
<dbReference type="Pfam" id="PF00778">
    <property type="entry name" value="DIX"/>
    <property type="match status" value="1"/>
</dbReference>
<dbReference type="Pfam" id="PF12316">
    <property type="entry name" value="Dsh_C"/>
    <property type="match status" value="1"/>
</dbReference>
<dbReference type="Pfam" id="PF00595">
    <property type="entry name" value="PDZ"/>
    <property type="match status" value="1"/>
</dbReference>
<dbReference type="PRINTS" id="PR01760">
    <property type="entry name" value="DISHEVELLED"/>
</dbReference>
<dbReference type="PRINTS" id="PR01762">
    <property type="entry name" value="DISHEVELLED2"/>
</dbReference>
<dbReference type="SMART" id="SM00021">
    <property type="entry name" value="DAX"/>
    <property type="match status" value="1"/>
</dbReference>
<dbReference type="SMART" id="SM00049">
    <property type="entry name" value="DEP"/>
    <property type="match status" value="1"/>
</dbReference>
<dbReference type="SMART" id="SM00228">
    <property type="entry name" value="PDZ"/>
    <property type="match status" value="1"/>
</dbReference>
<dbReference type="SUPFAM" id="SSF50156">
    <property type="entry name" value="PDZ domain-like"/>
    <property type="match status" value="1"/>
</dbReference>
<dbReference type="SUPFAM" id="SSF54236">
    <property type="entry name" value="Ubiquitin-like"/>
    <property type="match status" value="1"/>
</dbReference>
<dbReference type="SUPFAM" id="SSF46785">
    <property type="entry name" value="Winged helix' DNA-binding domain"/>
    <property type="match status" value="1"/>
</dbReference>
<dbReference type="PROSITE" id="PS50186">
    <property type="entry name" value="DEP"/>
    <property type="match status" value="1"/>
</dbReference>
<dbReference type="PROSITE" id="PS50841">
    <property type="entry name" value="DIX"/>
    <property type="match status" value="1"/>
</dbReference>
<dbReference type="PROSITE" id="PS50106">
    <property type="entry name" value="PDZ"/>
    <property type="match status" value="1"/>
</dbReference>
<gene>
    <name type="primary">dvl2</name>
    <name type="synonym">dsh</name>
</gene>
<protein>
    <recommendedName>
        <fullName>Segment polarity protein dishevelled homolog DVL-2</fullName>
        <shortName>Dishevelled-2</shortName>
    </recommendedName>
    <alternativeName>
        <fullName>DSH homolog 2</fullName>
    </alternativeName>
    <alternativeName>
        <fullName>Xdsh</fullName>
    </alternativeName>
</protein>
<comment type="function">
    <text evidence="5 6 8 9 10 11 12 13 15 16 17 18 19 22 24 25 26">Involved in at least 2 independent signaling cascades, controlling cell fate via canonical Wnt signaling and cell polarity via a planar cell polarity (PCP) cascade. Acts synergistically with dal/dapple-like to activate Wnt signaling, stabilizing ctnnb1/beta-catenin and leading to dorsal axis formation. Also prevents degradation of ctnnb1/beta-catenin by displacing gsk3 from a complex with ARP/Axin-related protein. Has an additional role in anterior-posterior (A/P) axis formation, specifying different neuroectodermal cell fates along the A/P axis in a dose-dependent manner by activating several early patterning genes. In the PCP pathway, required at the cell membrane for PCP-mediated neural and mesodermal convergent extension during gastrulation and subsequent neural tube closure, acting to activate jnk. Also involved in blastopore closure and archenteron elongation during early, but not late, gastrulation. Associates with ephrin receptors and ligands and acts as part of a downstream PCP pathway to mediate ephrin-mediated cell repulsion via activation of rhoa. Required for efnb1/ephrin-B1-driven movement of non-retinal progenitor cells into the retina during eye field formation. Patterns the hindbrain. Required for ciliogenesis. Controls the docking of basal bodies to the apical plasma membrane; mediates the activation, but not localization of rhoa at the apical surface of ciliated cells during basal body docking. Furthermore, required for the association of basal bodies with membrane-bound vesicles and the vesicle-trafficking protein exoc4/sec8, and this association is in turn required for basal body docking. Once basal bodies are docked, required for the planar polarization of basal bodies that underlies ciliary beating and the directional fluid flow across ciliated epithelia.</text>
</comment>
<comment type="subunit">
    <text evidence="6 7 10 11 13 14 18 19 20 21 23">Can form homomultimers. Interacts with prickle1. Interacts (via PDZ domain) with ccdc88c/dal and dact1-B/dpr. Interacts (via DIX domain) with ARP/Axin-related protein and dact1-A/frodo. Interacts with sdc4, possibly via fz7. Interacts directly (via DEP domain) with efnb1/ephrin-B1 and indirectly with the phosphorylated ephrin receptors ephb1 and ephb2, via association with SH domain-containing adapters. May interact with lrrc6. Interacts with custos (via NLS1 and NLS2); the interaction is negatively regulated by Wnt stimulation (PubMed:25157132).</text>
</comment>
<comment type="interaction">
    <interactant intactId="EBI-6257503">
        <id>P51142</id>
    </interactant>
    <interactant intactId="EBI-6260685">
        <id>Q8AXM9</id>
        <label>ctnnd1</label>
    </interactant>
    <organismsDiffer>false</organismsDiffer>
    <experiments>2</experiments>
</comment>
<comment type="interaction">
    <interactant intactId="EBI-6257503">
        <id>P51142</id>
    </interactant>
    <interactant intactId="EBI-6257549">
        <id>Q8QG92</id>
        <label>dact1-b</label>
    </interactant>
    <organismsDiffer>false</organismsDiffer>
    <experiments>2</experiments>
</comment>
<comment type="interaction">
    <interactant intactId="EBI-6257503">
        <id>P51142</id>
    </interactant>
    <interactant intactId="EBI-7401819">
        <id>A5J090</id>
    </interactant>
    <organismsDiffer>false</organismsDiffer>
    <experiments>4</experiments>
</comment>
<comment type="interaction">
    <interactant intactId="EBI-6257503">
        <id>P51142</id>
    </interactant>
    <interactant intactId="EBI-20720366">
        <id>A0A0U2ULT4</id>
        <label>adgra2</label>
    </interactant>
    <organismsDiffer>true</organismsDiffer>
    <experiments>2</experiments>
</comment>
<comment type="subcellular location">
    <subcellularLocation>
        <location>Cytoplasm</location>
    </subcellularLocation>
    <subcellularLocation>
        <location>Cytoplasmic vesicle</location>
    </subcellularLocation>
    <subcellularLocation>
        <location>Cell projection</location>
        <location>Cilium</location>
    </subcellularLocation>
    <subcellularLocation>
        <location>Nucleus</location>
    </subcellularLocation>
    <subcellularLocation>
        <location>Cell membrane</location>
        <topology>Peripheral membrane protein</topology>
    </subcellularLocation>
    <text>Phosphorylated and recruited from the cytoplasm to the cell membrane by frizzled proteins. Also relocated to the cell membrane by sdc4 and ephb1/ephrin-B1. Concentrated at cell membrane in both ciliated and non-ciliated cells. Enriched at the apical surface of ciliated cells. Localized to the cilium rootlet.</text>
</comment>
<comment type="tissue specificity">
    <text evidence="5 13 19 24">Expressed equally in both animal-vegetal and dorsal-ventral directions of the early blastula. Becomes enriched on the dorsal side of the embryo after cortical rotation. Expressed along the anterior margin of eye field of neurulae (stage 16 embryos) and in the anterolateral crescent that borders the eye field. Continues to be expressed in the optic cup at stage 26. Expressed in the central nervous system throughout the early tailbud stage including the entire hindbrain.</text>
</comment>
<comment type="developmental stage">
    <text evidence="24">Expressed maternally. Most abundant in eggs and expressed at a low level in blastulae, gastrulae, neurulae and tailbud embryonic stages.</text>
</comment>
<comment type="domain">
    <text evidence="6 7 22">The C-terminal region containing the DEP domain is required for membrane accumulation and phosphorylation. Wnt signaling and axis induction requires the DIX domain. The C-terminus contributes to the localization at the cilia base.</text>
</comment>
<comment type="PTM">
    <text evidence="7">Phosphorylated. Phosphorylation is controlled by frizzled proteins, correlates with the onset of embryo dorsalizing events and is higher in the dorsal half of early cleavage embryos. Phosphorylated on tyrosine residues in response to association with efnb1/ephrin-B1.</text>
</comment>
<comment type="similarity">
    <text evidence="27">Belongs to the DSH family.</text>
</comment>
<proteinExistence type="evidence at protein level"/>
<keyword id="KW-0002">3D-structure</keyword>
<keyword id="KW-1003">Cell membrane</keyword>
<keyword id="KW-0966">Cell projection</keyword>
<keyword id="KW-0969">Cilium</keyword>
<keyword id="KW-0970">Cilium biogenesis/degradation</keyword>
<keyword id="KW-0963">Cytoplasm</keyword>
<keyword id="KW-0968">Cytoplasmic vesicle</keyword>
<keyword id="KW-0217">Developmental protein</keyword>
<keyword id="KW-0306">Gastrulation</keyword>
<keyword id="KW-0472">Membrane</keyword>
<keyword id="KW-0539">Nucleus</keyword>
<keyword id="KW-0597">Phosphoprotein</keyword>
<keyword id="KW-1185">Reference proteome</keyword>
<keyword id="KW-0879">Wnt signaling pathway</keyword>
<feature type="chain" id="PRO_0000145748" description="Segment polarity protein dishevelled homolog DVL-2">
    <location>
        <begin position="1"/>
        <end position="736"/>
    </location>
</feature>
<feature type="domain" description="DIX" evidence="2">
    <location>
        <begin position="1"/>
        <end position="82"/>
    </location>
</feature>
<feature type="domain" description="PDZ" evidence="3">
    <location>
        <begin position="254"/>
        <end position="326"/>
    </location>
</feature>
<feature type="domain" description="DEP" evidence="1">
    <location>
        <begin position="428"/>
        <end position="502"/>
    </location>
</feature>
<feature type="region of interest" description="Disordered" evidence="4">
    <location>
        <begin position="79"/>
        <end position="241"/>
    </location>
</feature>
<feature type="region of interest" description="Interaction with custos" evidence="23">
    <location>
        <begin position="327"/>
        <end position="427"/>
    </location>
</feature>
<feature type="region of interest" description="Disordered" evidence="4">
    <location>
        <begin position="574"/>
        <end position="664"/>
    </location>
</feature>
<feature type="compositionally biased region" description="Pro residues" evidence="4">
    <location>
        <begin position="100"/>
        <end position="114"/>
    </location>
</feature>
<feature type="compositionally biased region" description="Basic and acidic residues" evidence="4">
    <location>
        <begin position="149"/>
        <end position="160"/>
    </location>
</feature>
<feature type="compositionally biased region" description="Low complexity" evidence="4">
    <location>
        <begin position="181"/>
        <end position="195"/>
    </location>
</feature>
<feature type="compositionally biased region" description="Polar residues" evidence="4">
    <location>
        <begin position="205"/>
        <end position="217"/>
    </location>
</feature>
<feature type="compositionally biased region" description="Basic residues" evidence="4">
    <location>
        <begin position="219"/>
        <end position="231"/>
    </location>
</feature>
<feature type="compositionally biased region" description="Low complexity" evidence="4">
    <location>
        <begin position="574"/>
        <end position="593"/>
    </location>
</feature>
<feature type="compositionally biased region" description="Low complexity" evidence="4">
    <location>
        <begin position="616"/>
        <end position="629"/>
    </location>
</feature>
<feature type="mutagenesis site" description="No effect on interaction with dact1-B/dpr." evidence="11">
    <original>QSNE</original>
    <variation>AANA</variation>
    <location>
        <begin position="272"/>
        <end position="275"/>
    </location>
</feature>
<feature type="mutagenesis site" description="Abolishes interaction with dact1-B/dpr." evidence="11">
    <original>N</original>
    <variation>T</variation>
    <location>
        <position position="317"/>
    </location>
</feature>
<feature type="strand" evidence="28">
    <location>
        <begin position="252"/>
        <end position="257"/>
    </location>
</feature>
<feature type="helix" evidence="28">
    <location>
        <begin position="259"/>
        <end position="262"/>
    </location>
</feature>
<feature type="strand" evidence="28">
    <location>
        <begin position="267"/>
        <end position="270"/>
    </location>
</feature>
<feature type="strand" evidence="28">
    <location>
        <begin position="281"/>
        <end position="287"/>
    </location>
</feature>
<feature type="helix" evidence="28">
    <location>
        <begin position="291"/>
        <end position="295"/>
    </location>
</feature>
<feature type="strand" evidence="28">
    <location>
        <begin position="303"/>
        <end position="307"/>
    </location>
</feature>
<feature type="helix" evidence="28">
    <location>
        <begin position="317"/>
        <end position="329"/>
    </location>
</feature>
<feature type="strand" evidence="28">
    <location>
        <begin position="330"/>
        <end position="332"/>
    </location>
</feature>
<feature type="strand" evidence="28">
    <location>
        <begin position="334"/>
        <end position="339"/>
    </location>
</feature>
<evidence type="ECO:0000255" key="1">
    <source>
        <dbReference type="PROSITE-ProRule" id="PRU00066"/>
    </source>
</evidence>
<evidence type="ECO:0000255" key="2">
    <source>
        <dbReference type="PROSITE-ProRule" id="PRU00069"/>
    </source>
</evidence>
<evidence type="ECO:0000255" key="3">
    <source>
        <dbReference type="PROSITE-ProRule" id="PRU00143"/>
    </source>
</evidence>
<evidence type="ECO:0000256" key="4">
    <source>
        <dbReference type="SAM" id="MobiDB-lite"/>
    </source>
</evidence>
<evidence type="ECO:0000269" key="5">
    <source>
    </source>
</evidence>
<evidence type="ECO:0000269" key="6">
    <source>
    </source>
</evidence>
<evidence type="ECO:0000269" key="7">
    <source>
    </source>
</evidence>
<evidence type="ECO:0000269" key="8">
    <source>
    </source>
</evidence>
<evidence type="ECO:0000269" key="9">
    <source>
    </source>
</evidence>
<evidence type="ECO:0000269" key="10">
    <source>
    </source>
</evidence>
<evidence type="ECO:0000269" key="11">
    <source>
    </source>
</evidence>
<evidence type="ECO:0000269" key="12">
    <source>
    </source>
</evidence>
<evidence type="ECO:0000269" key="13">
    <source>
    </source>
</evidence>
<evidence type="ECO:0000269" key="14">
    <source>
    </source>
</evidence>
<evidence type="ECO:0000269" key="15">
    <source>
    </source>
</evidence>
<evidence type="ECO:0000269" key="16">
    <source>
    </source>
</evidence>
<evidence type="ECO:0000269" key="17">
    <source>
    </source>
</evidence>
<evidence type="ECO:0000269" key="18">
    <source>
    </source>
</evidence>
<evidence type="ECO:0000269" key="19">
    <source>
    </source>
</evidence>
<evidence type="ECO:0000269" key="20">
    <source>
    </source>
</evidence>
<evidence type="ECO:0000269" key="21">
    <source>
    </source>
</evidence>
<evidence type="ECO:0000269" key="22">
    <source>
    </source>
</evidence>
<evidence type="ECO:0000269" key="23">
    <source>
    </source>
</evidence>
<evidence type="ECO:0000269" key="24">
    <source>
    </source>
</evidence>
<evidence type="ECO:0000269" key="25">
    <source>
    </source>
</evidence>
<evidence type="ECO:0000269" key="26">
    <source>
    </source>
</evidence>
<evidence type="ECO:0000305" key="27"/>
<evidence type="ECO:0007829" key="28">
    <source>
        <dbReference type="PDB" id="2F0A"/>
    </source>
</evidence>
<accession>P51142</accession>
<sequence length="736" mass="79787">MAETKVIYHLDEEETPYLVKVPVPATDIRLRDFKAALGRGHAKYFFKAMDQDFGVVKEEISDDNAKLPCFNDRVVSWLASSEGSQPDSAPPAPATEVRPEPPPPVPPPIPPPPAERTSGIGDSRPPSFHPNVSGSTEQLDQDNESVISMRRDRVRRRESSEQAGVGRGVNGRTERHLSGYESSSTLLTSEIETSICDSEEDDTMSRFSSSTEQSSASRLLKRHRRRRKQRPPRLERTSSFSSVTDSTMSLNIITVTLNMEKYNFLGISIVGQSNERGDGGIYIGSIMKGGAVAADGRIEPGDMLLQVNDINFENMSNDDAVRVLRDIVHKPGPIVLTVAKCWDPSPQGYFTLPRNEPIHPIDPAAWVSHSAALSGSFPVYPGSASMSSMTSSTSVTETELSHALPPVSLFSLSVHTDLASVVKVMASPESGLEVRDRMWLKITIPNAFLGSDVVDWLYHHVEGFQDRREARKFASNLLKAGFIRHTVNKITFSEQCYYIFGDLTGCENYMTNLSLNDNDGSSGASDQDTLAPLPLPGASPWPLLPTFSYQYQAPHPYSTQPPAYHELSSYSYGMGSAGSQHSEGSRSSGSNRSDGGRGMQKDDRSGVAGVGGGDSKSGSGSESEYSTRSSIRRVGGGEAGPPSERSTSSRLPPHHPPSVHSYAAPGVPLSYNPMMLMMMPPPPLPPPGVCPPNSSVPPGAPPLVRDLASVPPELTATRQSFHMAMGNPSEFFVDVM</sequence>
<reference key="1">
    <citation type="journal article" date="1995" name="Development">
        <title>Dorsalizing and neuralizing properties of Xdsh, a maternally expressed Xenopus homolog of dishevelled.</title>
        <authorList>
            <person name="Sokol S.Y."/>
            <person name="Klingensmith J."/>
            <person name="Perrimon N."/>
            <person name="Itoh K."/>
        </authorList>
    </citation>
    <scope>NUCLEOTIDE SEQUENCE [MRNA]</scope>
    <scope>FUNCTION</scope>
    <scope>TISSUE SPECIFICITY</scope>
    <scope>DEVELOPMENTAL STAGE</scope>
    <source>
        <tissue>Oocyte</tissue>
    </source>
</reference>
<reference key="2">
    <citation type="journal article" date="1995" name="Development">
        <authorList>
            <person name="Sokol S.Y."/>
            <person name="Klingensmith J."/>
            <person name="Perrimon N."/>
            <person name="Itoh K."/>
        </authorList>
    </citation>
    <scope>ERRATUM OF PUBMED:7600981</scope>
</reference>
<reference key="3">
    <citation type="journal article" date="1996" name="Curr. Biol.">
        <title>Analysis of Dishevelled signalling pathways during Xenopus development.</title>
        <authorList>
            <person name="Sokol S.Y."/>
        </authorList>
    </citation>
    <scope>FUNCTION</scope>
</reference>
<reference key="4">
    <citation type="journal article" date="1997" name="Mech. Dev.">
        <title>Graded amounts of Xenopus dishevelled specify discrete anteroposterior cell fates in prospective ectoderm.</title>
        <authorList>
            <person name="Itoh K."/>
            <person name="Sokol S.Y."/>
        </authorList>
    </citation>
    <scope>FUNCTION</scope>
</reference>
<reference key="5">
    <citation type="journal article" date="1999" name="J. Cell Biol.">
        <title>Establishment of the dorsal-ventral axis in Xenopus embryos coincides with the dorsal enrichment of dishevelled that is dependent on cortical rotation.</title>
        <authorList>
            <person name="Miller J.R."/>
            <person name="Rowning B.A."/>
            <person name="Larabell C.A."/>
            <person name="Yang-Snyder J.A."/>
            <person name="Bates R.L."/>
            <person name="Moon R.T."/>
        </authorList>
    </citation>
    <scope>FUNCTION</scope>
    <scope>SUBCELLULAR LOCATION</scope>
    <scope>TISSUE SPECIFICITY</scope>
</reference>
<reference key="6">
    <citation type="journal article" date="2000" name="Dev. Dyn.">
        <title>Interaction of Frizzled 7 and Dishevelled in Xenopus.</title>
        <authorList>
            <person name="Medina A."/>
            <person name="Steinbeisser H."/>
        </authorList>
    </citation>
    <scope>SUBCELLULAR LOCATION</scope>
</reference>
<reference key="7">
    <citation type="journal article" date="2000" name="EMBO J.">
        <title>Dishevelled phosphorylation, subcellular localization and multimerization regulate its role in early embryogenesis.</title>
        <authorList>
            <person name="Rothbaecher U."/>
            <person name="Laurent M.N."/>
            <person name="Deardorff M.A."/>
            <person name="Klein P.S."/>
            <person name="Cho K.W.Y."/>
            <person name="Fraser S.E."/>
        </authorList>
    </citation>
    <scope>SUBUNIT</scope>
    <scope>SUBCELLULAR LOCATION</scope>
    <scope>PHOSPHORYLATION</scope>
    <scope>DOMAIN</scope>
</reference>
<reference key="8">
    <citation type="journal article" date="2000" name="Mol. Cell. Biol.">
        <title>Interaction of dishevelled and Xenopus axin-related protein is required for wnt signal transduction.</title>
        <authorList>
            <person name="Itoh K."/>
            <person name="Antipova A."/>
            <person name="Ratcliffe M.J."/>
            <person name="Sokol S.Y."/>
        </authorList>
    </citation>
    <scope>FUNCTION</scope>
    <scope>INTERACTION WITH ARP</scope>
    <scope>SUBCELLULAR LOCATION</scope>
    <scope>DOMAIN</scope>
</reference>
<reference key="9">
    <citation type="journal article" date="2000" name="Nature">
        <title>Dishevelled controls cell polarity during Xenopus gastrulation.</title>
        <authorList>
            <person name="Wallingford J.B."/>
            <person name="Rowning B.A."/>
            <person name="Vogeli K.M."/>
            <person name="Rothbaecher U."/>
            <person name="Fraser S.E."/>
            <person name="Harland R.M."/>
        </authorList>
    </citation>
    <scope>FUNCTION</scope>
    <scope>SUBCELLULAR LOCATION</scope>
</reference>
<reference key="10">
    <citation type="journal article" date="2001" name="Development">
        <title>Xenopus Dishevelled signaling regulates both neural and mesodermal convergent extension: parallel forces elongating the body axis.</title>
        <authorList>
            <person name="Wallingford J.B."/>
            <person name="Harland R.M."/>
        </authorList>
    </citation>
    <scope>FUNCTION</scope>
</reference>
<reference key="11">
    <citation type="journal article" date="2002" name="Development">
        <title>Neural tube closure requires Dishevelled-dependent convergent extension of the midline.</title>
        <authorList>
            <person name="Wallingford J.B."/>
            <person name="Harland R.M."/>
        </authorList>
    </citation>
    <scope>FUNCTION</scope>
</reference>
<reference key="12">
    <citation type="journal article" date="2002" name="Nat. Cell Biol.">
        <title>Frodo interacts with Dishevelled to transduce Wnt signals.</title>
        <authorList>
            <person name="Gloy J."/>
            <person name="Hikasa H."/>
            <person name="Sokol S.Y."/>
        </authorList>
    </citation>
    <scope>FUNCTION</scope>
    <scope>INTERACTION WITH DACT1-A</scope>
</reference>
<reference key="13">
    <citation type="journal article" date="2003" name="Curr. Biol.">
        <title>The prickle-related gene in vertebrates is essential for gastrulation cell movements.</title>
        <authorList>
            <person name="Takeuchi M."/>
            <person name="Nakabayashi J."/>
            <person name="Sakaguchi T."/>
            <person name="Yamamoto T.S."/>
            <person name="Takahashi H."/>
            <person name="Takeda H."/>
            <person name="Ueno N."/>
        </authorList>
    </citation>
    <scope>INTERACTION WITH PRICKLE1</scope>
</reference>
<reference key="14">
    <citation type="journal article" date="2003" name="EMBO J.">
        <title>Association of Dishevelled with Eph tyrosine kinase receptor and ephrin mediates cell repulsion.</title>
        <authorList>
            <person name="Tanaka M."/>
            <person name="Kamo T."/>
            <person name="Ota S."/>
            <person name="Sugimura H."/>
        </authorList>
    </citation>
    <scope>FUNCTION</scope>
    <scope>INTERACTION WITH EFNB1; EPHB1 AND EPHB2</scope>
    <scope>TISSUE SPECIFICITY</scope>
    <scope>TYROSINE PHOSPHORYLATION</scope>
</reference>
<reference key="15">
    <citation type="journal article" date="2004" name="Development">
        <title>Regional requirements for Dishevelled signaling during Xenopus gastrulation: separable effects on blastopore closure, mesendoderm internalization and archenteron formation.</title>
        <authorList>
            <person name="Ewald A.J."/>
            <person name="Peyrot S.M."/>
            <person name="Tyszka J.M."/>
            <person name="Fraser S.E."/>
            <person name="Wallingford J.B."/>
        </authorList>
    </citation>
    <scope>FUNCTION</scope>
</reference>
<reference key="16">
    <citation type="journal article" date="2005" name="Curr. Biol.">
        <title>Subcellular localization and signaling properties of dishevelled in developing vertebrate embryos.</title>
        <authorList>
            <person name="Park T.J."/>
            <person name="Gray R.S."/>
            <person name="Sato A."/>
            <person name="Habas R."/>
            <person name="Wallingford J.B."/>
        </authorList>
    </citation>
    <scope>FUNCTION</scope>
    <scope>SUBCELLULAR LOCATION</scope>
</reference>
<reference key="17">
    <citation type="journal article" date="2005" name="Mech. Dev.">
        <title>Novel Daple-like protein positively regulates both the Wnt/beta-catenin pathway and the Wnt/JNK pathway in Xenopus.</title>
        <authorList>
            <person name="Kobayashi H."/>
            <person name="Michiue T."/>
            <person name="Yukita A."/>
            <person name="Danno H."/>
            <person name="Sakurai K."/>
            <person name="Fukui A."/>
            <person name="Kikuchi A."/>
            <person name="Asashima M."/>
        </authorList>
    </citation>
    <scope>FUNCTION</scope>
    <scope>INTERACTION WITH CCDC88C</scope>
</reference>
<reference key="18">
    <citation type="journal article" date="2005" name="Proc. Natl. Acad. Sci. U.S.A.">
        <title>Identification of the Wnt signaling activator leucine-rich repeat in Flightless interaction protein 2 by a genome-wide functional analysis.</title>
        <authorList>
            <person name="Liu J."/>
            <person name="Bang A.G."/>
            <person name="Kintner C."/>
            <person name="Orth A.P."/>
            <person name="Chanda S.K."/>
            <person name="Ding S."/>
            <person name="Schultz P.G."/>
        </authorList>
    </citation>
    <scope>FUNCTION</scope>
</reference>
<reference key="19">
    <citation type="journal article" date="2006" name="Nat. Cell Biol.">
        <title>Dishevelled mediates ephrinB1 signalling in the eye field through the planar cell polarity pathway.</title>
        <authorList>
            <person name="Lee H.-S."/>
            <person name="Bong Y.-S."/>
            <person name="Moore K.B."/>
            <person name="Soria K."/>
            <person name="Moody S.A."/>
            <person name="Daar I.O."/>
        </authorList>
    </citation>
    <scope>FUNCTION</scope>
    <scope>INTERACTION WITH EFNB1</scope>
    <scope>SUBCELLULAR LOCATION</scope>
    <scope>TISSUE SPECIFICITY</scope>
</reference>
<reference key="20">
    <citation type="journal article" date="2006" name="Nat. Cell Biol.">
        <title>Syndecan-4 regulates non-canonical Wnt signalling and is essential for convergent and extension movements in Xenopus embryos.</title>
        <authorList>
            <person name="Munoz R."/>
            <person name="Moreno M."/>
            <person name="Oliva C."/>
            <person name="Orbenes C."/>
            <person name="Larrain J."/>
        </authorList>
    </citation>
    <scope>INTERACTION WITH SDC4</scope>
    <scope>SUBCELLULAR LOCATION</scope>
</reference>
<reference key="21">
    <citation type="journal article" date="2008" name="Dev. Cell">
        <title>Cystic kidney gene seahorse regulates cilia-mediated processes and Wnt pathways.</title>
        <authorList>
            <person name="Kishimoto N."/>
            <person name="Cao Y."/>
            <person name="Park A."/>
            <person name="Sun Z."/>
        </authorList>
    </citation>
    <scope>INTERACTION WITH LRRC6</scope>
</reference>
<reference key="22">
    <citation type="journal article" date="2008" name="Nat. Genet.">
        <title>Dishevelled controls apical docking and planar polarization of basal bodies in ciliated epithelial cells.</title>
        <authorList>
            <person name="Park T.J."/>
            <person name="Mitchell B.J."/>
            <person name="Abitua P.B."/>
            <person name="Kintner C."/>
            <person name="Wallingford J.B."/>
        </authorList>
    </citation>
    <scope>FUNCTION</scope>
    <scope>SUBCELLULAR LOCATION</scope>
    <scope>DOMAIN</scope>
</reference>
<reference key="23">
    <citation type="journal article" date="2014" name="Proc. Natl. Acad. Sci. U.S.A.">
        <title>Custos controls beta-catenin to regulate head development during vertebrate embryogenesis.</title>
        <authorList>
            <person name="Komiya Y."/>
            <person name="Mandrekar N."/>
            <person name="Sato A."/>
            <person name="Dawid I.B."/>
            <person name="Habas R."/>
        </authorList>
    </citation>
    <scope>INTERACTION WITH CUSTOS</scope>
</reference>
<reference key="24">
    <citation type="journal article" date="2002" name="Dev. Cell">
        <title>Dapper, a Dishevelled-associated antagonist of beta-catenin and JNK signaling, is required for notochord formation.</title>
        <authorList>
            <person name="Cheyette B.N.R."/>
            <person name="Waxman J.S."/>
            <person name="Miller J.R."/>
            <person name="Takemaru K."/>
            <person name="Sheldahl L.C."/>
            <person name="Khlebtsova N."/>
            <person name="Fox E.P."/>
            <person name="Earnest T.N."/>
            <person name="Moon R.T."/>
        </authorList>
    </citation>
    <scope>X-RAY CRYSTALLOGRAPHY (2.2 ANGSTROMS) OF 252-340 IN COMPLEX WITH DACT1-B</scope>
    <scope>FUNCTION</scope>
    <scope>INTERACTION WITH DACT1-B</scope>
    <scope>SUBCELLULAR LOCATION</scope>
    <scope>MUTAGENESIS OF 272-GLN--GLU-275 AND ASN-317</scope>
</reference>
<reference key="25">
    <citation type="submission" date="2005-11" db="PDB data bank">
        <title>Conformational flexibility in the PDZ domain of Dishevelled induced by target binding.</title>
        <authorList>
            <person name="Friedland N."/>
            <person name="Hung L.-W."/>
            <person name="Cheyette B.N.R."/>
            <person name="Miller J.R."/>
            <person name="Moon R.T."/>
            <person name="Earnest T.N."/>
        </authorList>
    </citation>
    <scope>X-RAY CRYSTALLOGRAPHY (1.8 ANGSTROMS) OF 252-340</scope>
</reference>
<organism>
    <name type="scientific">Xenopus laevis</name>
    <name type="common">African clawed frog</name>
    <dbReference type="NCBI Taxonomy" id="8355"/>
    <lineage>
        <taxon>Eukaryota</taxon>
        <taxon>Metazoa</taxon>
        <taxon>Chordata</taxon>
        <taxon>Craniata</taxon>
        <taxon>Vertebrata</taxon>
        <taxon>Euteleostomi</taxon>
        <taxon>Amphibia</taxon>
        <taxon>Batrachia</taxon>
        <taxon>Anura</taxon>
        <taxon>Pipoidea</taxon>
        <taxon>Pipidae</taxon>
        <taxon>Xenopodinae</taxon>
        <taxon>Xenopus</taxon>
        <taxon>Xenopus</taxon>
    </lineage>
</organism>
<name>DVL2_XENLA</name>